<reference key="1">
    <citation type="submission" date="2006-10" db="EMBL/GenBank/DDBJ databases">
        <authorList>
            <consortium name="NIH - Mammalian Gene Collection (MGC) project"/>
        </authorList>
    </citation>
    <scope>NUCLEOTIDE SEQUENCE [LARGE SCALE MRNA]</scope>
    <source>
        <strain>Hereford</strain>
        <tissue>Basal ganglia</tissue>
    </source>
</reference>
<feature type="transit peptide" description="Mitochondrion" evidence="1">
    <location>
        <begin position="1"/>
        <end position="31"/>
    </location>
</feature>
<feature type="propeptide" id="PRO_0000287725" evidence="1">
    <location>
        <begin position="32"/>
        <end position="133"/>
    </location>
</feature>
<feature type="chain" id="PRO_0000287726" description="Serine protease HTRA2, mitochondrial">
    <location>
        <begin position="134"/>
        <end position="458"/>
    </location>
</feature>
<feature type="transmembrane region" description="Helical" evidence="3">
    <location>
        <begin position="105"/>
        <end position="125"/>
    </location>
</feature>
<feature type="domain" description="PDZ">
    <location>
        <begin position="364"/>
        <end position="445"/>
    </location>
</feature>
<feature type="region of interest" description="Serine protease">
    <location>
        <begin position="166"/>
        <end position="342"/>
    </location>
</feature>
<feature type="short sequence motif" description="IAP-binding motif">
    <location>
        <begin position="134"/>
        <end position="137"/>
    </location>
</feature>
<feature type="active site" description="Charge relay system" evidence="2">
    <location>
        <position position="198"/>
    </location>
</feature>
<feature type="active site" description="Charge relay system" evidence="2">
    <location>
        <position position="228"/>
    </location>
</feature>
<feature type="active site" description="Charge relay system" evidence="2">
    <location>
        <position position="306"/>
    </location>
</feature>
<evidence type="ECO:0000250" key="1"/>
<evidence type="ECO:0000250" key="2">
    <source>
        <dbReference type="UniProtKB" id="O43464"/>
    </source>
</evidence>
<evidence type="ECO:0000255" key="3"/>
<evidence type="ECO:0000305" key="4"/>
<keyword id="KW-0053">Apoptosis</keyword>
<keyword id="KW-0378">Hydrolase</keyword>
<keyword id="KW-0472">Membrane</keyword>
<keyword id="KW-0496">Mitochondrion</keyword>
<keyword id="KW-0645">Protease</keyword>
<keyword id="KW-1185">Reference proteome</keyword>
<keyword id="KW-0720">Serine protease</keyword>
<keyword id="KW-0809">Transit peptide</keyword>
<keyword id="KW-0812">Transmembrane</keyword>
<keyword id="KW-1133">Transmembrane helix</keyword>
<keyword id="KW-0832">Ubl conjugation</keyword>
<keyword id="KW-0865">Zymogen</keyword>
<gene>
    <name type="primary">HTRA2</name>
</gene>
<comment type="function">
    <text evidence="2">Serine protease that shows proteolytic activity against a non-specific substrate beta-casein (By similarity). Promotes apoptosis by either relieving the inhibition of BIRC proteins on caspases, leading to an increase in caspase activity; or by a BIRC inhibition-independent, caspase-independent and serine protease activity-dependent mechanism (By similarity). Cleaves BIRC6 and relieves its inhibition on CASP3, CASP7 and CASP9, but it is also prone to inhibition by BIRC6 (By similarity). Cleaves THAP5 and promotes its degradation during apoptosis (By similarity).</text>
</comment>
<comment type="catalytic activity">
    <reaction>
        <text>Cleavage of non-polar aliphatic amino-acids at the P1 position, with a preference for Val, Ile and Met. At the P2 and P3 positions, Arg is selected most strongly with a secondary preference for other hydrophilic residues.</text>
        <dbReference type="EC" id="3.4.21.108"/>
    </reaction>
</comment>
<comment type="activity regulation">
    <text evidence="2">Inhibited by BIRC6.</text>
</comment>
<comment type="subunit">
    <text evidence="2">Homotrimer. Interacts with MXI2. Interacts with THAP5 under apoptotic conditions (By similarity). The mature protein, but not the precursor, binds to BIRC2/c-IAP1, BIRC3/c-IAP2 and XIAP/BIRC4 (By similarity). Interacts with BIRC6/bruce (By similarity). Interacts with AREL1 (via HECT domain); in the cytoplasm following induction of apoptosis (By similarity).</text>
</comment>
<comment type="subcellular location">
    <subcellularLocation>
        <location>Mitochondrion intermembrane space</location>
    </subcellularLocation>
    <subcellularLocation>
        <location evidence="4">Mitochondrion membrane</location>
        <topology evidence="4">Single-pass membrane protein</topology>
    </subcellularLocation>
    <text evidence="1">Predominantly present in the intermembrane space. Released into the cytosol following apoptotic stimuli, such as UV treatment, and stimulation of mitochondria with caspase-8 truncated BID/tBID (By similarity).</text>
</comment>
<comment type="domain">
    <text evidence="1">The mature N-terminus is involved in the interaction with XIAP.</text>
</comment>
<comment type="domain">
    <text evidence="1">The PDZ domain mediates interaction with MXI2.</text>
</comment>
<comment type="PTM">
    <text evidence="2">Ubiquitinated by BIRC6; this activity is inhibited by DIABLO/SMAC.</text>
</comment>
<comment type="PTM">
    <text evidence="2">Autoproteolytically activated.</text>
</comment>
<comment type="similarity">
    <text evidence="4">Belongs to the peptidase S1C family.</text>
</comment>
<sequence>MAALRAGRGAGWSLRGWRALWGGRWGKGPLLTPDLRALLTSGTPDPRTRVTYGTPSFRARLSVGVPEPRTCLRSRTSDLRARLIAGTPDPRTPEDSGTPGTRLRVWLAVALGAGGAVLLLFWGGGRGPPAVLASVLGSPPTSPRSQYNFIADVVEKTAPAVVYIEILGRHPFSGREVPISNGSGFVVAADGLIVTNAHVVADRRRVRVRLPSGDTYEAVVTAVDPVADIATLRIQTKEPLPTLPLGRSADVRQGEFVVAMGSPFALQNTITSGIVSSAQRPAKDLGLPQTNVEYIQTDAAIDFGNSGGPLVNLDGEVIGVNTMKVTSGISFAIPSDRLREFLHRGEKKNSWFGISGSQRRYIGVMMLTLTPSILAELQLREPSFPDVQHGVLIHKVILDSPAHRAGLRPGDVILAIGEQLVQNAEDIYEAVRTQSQLAVRIRRGQETLTLYVTPEVTE</sequence>
<proteinExistence type="evidence at transcript level"/>
<name>HTRA2_BOVIN</name>
<protein>
    <recommendedName>
        <fullName>Serine protease HTRA2, mitochondrial</fullName>
        <ecNumber>3.4.21.108</ecNumber>
    </recommendedName>
</protein>
<dbReference type="EC" id="3.4.21.108"/>
<dbReference type="EMBL" id="BC126737">
    <property type="protein sequence ID" value="AAI26738.1"/>
    <property type="molecule type" value="mRNA"/>
</dbReference>
<dbReference type="RefSeq" id="NP_001071424.1">
    <property type="nucleotide sequence ID" value="NM_001077956.1"/>
</dbReference>
<dbReference type="SMR" id="A0JNK3"/>
<dbReference type="FunCoup" id="A0JNK3">
    <property type="interactions" value="2703"/>
</dbReference>
<dbReference type="STRING" id="9913.ENSBTAP00000026804"/>
<dbReference type="MEROPS" id="S01.278"/>
<dbReference type="PaxDb" id="9913-ENSBTAP00000026804"/>
<dbReference type="Ensembl" id="ENSBTAT00000128719.1">
    <property type="protein sequence ID" value="ENSBTAP00000079371.1"/>
    <property type="gene ID" value="ENSBTAG00000020124.5"/>
</dbReference>
<dbReference type="GeneID" id="523039"/>
<dbReference type="KEGG" id="bta:523039"/>
<dbReference type="CTD" id="27429"/>
<dbReference type="VEuPathDB" id="HostDB:ENSBTAG00000020124"/>
<dbReference type="VGNC" id="VGNC:30005">
    <property type="gene designation" value="HTRA2"/>
</dbReference>
<dbReference type="eggNOG" id="KOG1320">
    <property type="taxonomic scope" value="Eukaryota"/>
</dbReference>
<dbReference type="GeneTree" id="ENSGT00940000155108"/>
<dbReference type="HOGENOM" id="CLU_020120_6_0_1"/>
<dbReference type="InParanoid" id="A0JNK3"/>
<dbReference type="OMA" id="MDNYRDE"/>
<dbReference type="OrthoDB" id="4217619at2759"/>
<dbReference type="TreeFam" id="TF323480"/>
<dbReference type="Reactome" id="R-BTA-9837999">
    <property type="pathway name" value="Mitochondrial protein degradation"/>
</dbReference>
<dbReference type="Proteomes" id="UP000009136">
    <property type="component" value="Chromosome 11"/>
</dbReference>
<dbReference type="Bgee" id="ENSBTAG00000020124">
    <property type="expression patterns" value="Expressed in retina and 105 other cell types or tissues"/>
</dbReference>
<dbReference type="GO" id="GO:0005758">
    <property type="term" value="C:mitochondrial intermembrane space"/>
    <property type="evidence" value="ECO:0007669"/>
    <property type="project" value="UniProtKB-SubCell"/>
</dbReference>
<dbReference type="GO" id="GO:0031966">
    <property type="term" value="C:mitochondrial membrane"/>
    <property type="evidence" value="ECO:0007669"/>
    <property type="project" value="UniProtKB-SubCell"/>
</dbReference>
<dbReference type="GO" id="GO:0005739">
    <property type="term" value="C:mitochondrion"/>
    <property type="evidence" value="ECO:0000318"/>
    <property type="project" value="GO_Central"/>
</dbReference>
<dbReference type="GO" id="GO:0004252">
    <property type="term" value="F:serine-type endopeptidase activity"/>
    <property type="evidence" value="ECO:0000318"/>
    <property type="project" value="GO_Central"/>
</dbReference>
<dbReference type="GO" id="GO:0006915">
    <property type="term" value="P:apoptotic process"/>
    <property type="evidence" value="ECO:0007669"/>
    <property type="project" value="UniProtKB-KW"/>
</dbReference>
<dbReference type="GO" id="GO:0043065">
    <property type="term" value="P:positive regulation of apoptotic process"/>
    <property type="evidence" value="ECO:0000318"/>
    <property type="project" value="GO_Central"/>
</dbReference>
<dbReference type="GO" id="GO:0012501">
    <property type="term" value="P:programmed cell death"/>
    <property type="evidence" value="ECO:0000318"/>
    <property type="project" value="GO_Central"/>
</dbReference>
<dbReference type="GO" id="GO:0006508">
    <property type="term" value="P:proteolysis"/>
    <property type="evidence" value="ECO:0000318"/>
    <property type="project" value="GO_Central"/>
</dbReference>
<dbReference type="CDD" id="cd06785">
    <property type="entry name" value="cpPDZ_HtrA-like"/>
    <property type="match status" value="1"/>
</dbReference>
<dbReference type="FunFam" id="2.40.10.120:FF:000004">
    <property type="entry name" value="Serine protease HTRA2, mitochondrial"/>
    <property type="match status" value="1"/>
</dbReference>
<dbReference type="FunFam" id="2.30.42.10:FF:000145">
    <property type="entry name" value="serine protease HTRA2, mitochondrial"/>
    <property type="match status" value="1"/>
</dbReference>
<dbReference type="Gene3D" id="2.30.42.10">
    <property type="match status" value="1"/>
</dbReference>
<dbReference type="Gene3D" id="2.40.10.120">
    <property type="match status" value="1"/>
</dbReference>
<dbReference type="InterPro" id="IPR001478">
    <property type="entry name" value="PDZ"/>
</dbReference>
<dbReference type="InterPro" id="IPR041489">
    <property type="entry name" value="PDZ_6"/>
</dbReference>
<dbReference type="InterPro" id="IPR036034">
    <property type="entry name" value="PDZ_sf"/>
</dbReference>
<dbReference type="InterPro" id="IPR009003">
    <property type="entry name" value="Peptidase_S1_PA"/>
</dbReference>
<dbReference type="InterPro" id="IPR001940">
    <property type="entry name" value="Peptidase_S1C"/>
</dbReference>
<dbReference type="PANTHER" id="PTHR22939">
    <property type="entry name" value="SERINE PROTEASE FAMILY S1C HTRA-RELATED"/>
    <property type="match status" value="1"/>
</dbReference>
<dbReference type="PANTHER" id="PTHR22939:SF127">
    <property type="entry name" value="SERINE PROTEASE HTRA2, MITOCHONDRIAL"/>
    <property type="match status" value="1"/>
</dbReference>
<dbReference type="Pfam" id="PF17820">
    <property type="entry name" value="PDZ_6"/>
    <property type="match status" value="1"/>
</dbReference>
<dbReference type="Pfam" id="PF13365">
    <property type="entry name" value="Trypsin_2"/>
    <property type="match status" value="1"/>
</dbReference>
<dbReference type="PRINTS" id="PR00834">
    <property type="entry name" value="PROTEASES2C"/>
</dbReference>
<dbReference type="SMART" id="SM00228">
    <property type="entry name" value="PDZ"/>
    <property type="match status" value="1"/>
</dbReference>
<dbReference type="SUPFAM" id="SSF50156">
    <property type="entry name" value="PDZ domain-like"/>
    <property type="match status" value="1"/>
</dbReference>
<dbReference type="SUPFAM" id="SSF50494">
    <property type="entry name" value="Trypsin-like serine proteases"/>
    <property type="match status" value="1"/>
</dbReference>
<organism>
    <name type="scientific">Bos taurus</name>
    <name type="common">Bovine</name>
    <dbReference type="NCBI Taxonomy" id="9913"/>
    <lineage>
        <taxon>Eukaryota</taxon>
        <taxon>Metazoa</taxon>
        <taxon>Chordata</taxon>
        <taxon>Craniata</taxon>
        <taxon>Vertebrata</taxon>
        <taxon>Euteleostomi</taxon>
        <taxon>Mammalia</taxon>
        <taxon>Eutheria</taxon>
        <taxon>Laurasiatheria</taxon>
        <taxon>Artiodactyla</taxon>
        <taxon>Ruminantia</taxon>
        <taxon>Pecora</taxon>
        <taxon>Bovidae</taxon>
        <taxon>Bovinae</taxon>
        <taxon>Bos</taxon>
    </lineage>
</organism>
<accession>A0JNK3</accession>